<comment type="function">
    <text evidence="1">Seems to be required for the assembly of the photosystem I complex.</text>
</comment>
<comment type="subcellular location">
    <subcellularLocation>
        <location evidence="1">Cellular thylakoid membrane</location>
        <topology evidence="1">Multi-pass membrane protein</topology>
    </subcellularLocation>
</comment>
<comment type="similarity">
    <text evidence="1">Belongs to the Ycf4 family.</text>
</comment>
<name>YCF4_PROMS</name>
<gene>
    <name evidence="1" type="primary">ycf4</name>
    <name type="ordered locus">A9601_13331</name>
</gene>
<reference key="1">
    <citation type="journal article" date="2007" name="PLoS Genet.">
        <title>Patterns and implications of gene gain and loss in the evolution of Prochlorococcus.</title>
        <authorList>
            <person name="Kettler G.C."/>
            <person name="Martiny A.C."/>
            <person name="Huang K."/>
            <person name="Zucker J."/>
            <person name="Coleman M.L."/>
            <person name="Rodrigue S."/>
            <person name="Chen F."/>
            <person name="Lapidus A."/>
            <person name="Ferriera S."/>
            <person name="Johnson J."/>
            <person name="Steglich C."/>
            <person name="Church G.M."/>
            <person name="Richardson P."/>
            <person name="Chisholm S.W."/>
        </authorList>
    </citation>
    <scope>NUCLEOTIDE SEQUENCE [LARGE SCALE GENOMIC DNA]</scope>
    <source>
        <strain>AS9601</strain>
    </source>
</reference>
<sequence length="185" mass="20422">MNSDLTSFDKIEQKIGGSRKISNYIIGGMLTIGGIGFLLASISSYTGRDLLPLGNPSTLLFIPQGIIMGAYGVIANLLNFYLWYLVYINFGSGSNYFDKSSKSVEIKRKGLFKDVEVKLNFDEIKSVKLDISEGFNPRRRIALVLKGRKKPLPLSGAGELKPLLQVEEEGARLAKFLDVNLEGLK</sequence>
<feature type="chain" id="PRO_1000025951" description="Photosystem I assembly protein Ycf4">
    <location>
        <begin position="1"/>
        <end position="185"/>
    </location>
</feature>
<feature type="transmembrane region" description="Helical" evidence="1">
    <location>
        <begin position="24"/>
        <end position="44"/>
    </location>
</feature>
<feature type="transmembrane region" description="Helical" evidence="1">
    <location>
        <begin position="66"/>
        <end position="86"/>
    </location>
</feature>
<dbReference type="EMBL" id="CP000551">
    <property type="protein sequence ID" value="ABM70617.1"/>
    <property type="molecule type" value="Genomic_DNA"/>
</dbReference>
<dbReference type="RefSeq" id="WP_011818756.1">
    <property type="nucleotide sequence ID" value="NC_008816.1"/>
</dbReference>
<dbReference type="STRING" id="146891.A9601_13331"/>
<dbReference type="KEGG" id="pmb:A9601_13331"/>
<dbReference type="eggNOG" id="ENOG502Z7YX">
    <property type="taxonomic scope" value="Bacteria"/>
</dbReference>
<dbReference type="HOGENOM" id="CLU_095465_0_0_3"/>
<dbReference type="OrthoDB" id="7059574at2"/>
<dbReference type="Proteomes" id="UP000002590">
    <property type="component" value="Chromosome"/>
</dbReference>
<dbReference type="GO" id="GO:0009522">
    <property type="term" value="C:photosystem I"/>
    <property type="evidence" value="ECO:0007669"/>
    <property type="project" value="InterPro"/>
</dbReference>
<dbReference type="GO" id="GO:0031676">
    <property type="term" value="C:plasma membrane-derived thylakoid membrane"/>
    <property type="evidence" value="ECO:0007669"/>
    <property type="project" value="UniProtKB-SubCell"/>
</dbReference>
<dbReference type="GO" id="GO:0015979">
    <property type="term" value="P:photosynthesis"/>
    <property type="evidence" value="ECO:0007669"/>
    <property type="project" value="UniProtKB-UniRule"/>
</dbReference>
<dbReference type="HAMAP" id="MF_00437">
    <property type="entry name" value="Ycf4"/>
    <property type="match status" value="1"/>
</dbReference>
<dbReference type="InterPro" id="IPR003359">
    <property type="entry name" value="PSI_Ycf4_assembly"/>
</dbReference>
<dbReference type="NCBIfam" id="NF002712">
    <property type="entry name" value="PRK02542.1"/>
    <property type="match status" value="1"/>
</dbReference>
<dbReference type="Pfam" id="PF02392">
    <property type="entry name" value="Ycf4"/>
    <property type="match status" value="1"/>
</dbReference>
<evidence type="ECO:0000255" key="1">
    <source>
        <dbReference type="HAMAP-Rule" id="MF_00437"/>
    </source>
</evidence>
<organism>
    <name type="scientific">Prochlorococcus marinus (strain AS9601)</name>
    <dbReference type="NCBI Taxonomy" id="146891"/>
    <lineage>
        <taxon>Bacteria</taxon>
        <taxon>Bacillati</taxon>
        <taxon>Cyanobacteriota</taxon>
        <taxon>Cyanophyceae</taxon>
        <taxon>Synechococcales</taxon>
        <taxon>Prochlorococcaceae</taxon>
        <taxon>Prochlorococcus</taxon>
    </lineage>
</organism>
<proteinExistence type="inferred from homology"/>
<protein>
    <recommendedName>
        <fullName evidence="1">Photosystem I assembly protein Ycf4</fullName>
    </recommendedName>
</protein>
<keyword id="KW-0472">Membrane</keyword>
<keyword id="KW-0602">Photosynthesis</keyword>
<keyword id="KW-0793">Thylakoid</keyword>
<keyword id="KW-0812">Transmembrane</keyword>
<keyword id="KW-1133">Transmembrane helix</keyword>
<accession>A2BS56</accession>